<sequence>MASTADFKNGLVLKVDGKLQQIVEFQHVKPGKGPAFVRTKLKDVVTGKTVDKTWNAGVKVETATVDRRDMTYLYNDGSSYILMDDKTFEQFELPLDAFGDAGRFLLENMRVQVSFHDGEALFGELPVSVDLRVEHTDPGLQGDRSTGGTKPATLETGAEIQVPLFIETGNVLKVDTRDGSYLSRVNN</sequence>
<organism>
    <name type="scientific">Corynebacterium efficiens (strain DSM 44549 / YS-314 / AJ 12310 / JCM 11189 / NBRC 100395)</name>
    <dbReference type="NCBI Taxonomy" id="196164"/>
    <lineage>
        <taxon>Bacteria</taxon>
        <taxon>Bacillati</taxon>
        <taxon>Actinomycetota</taxon>
        <taxon>Actinomycetes</taxon>
        <taxon>Mycobacteriales</taxon>
        <taxon>Corynebacteriaceae</taxon>
        <taxon>Corynebacterium</taxon>
    </lineage>
</organism>
<accession>Q8FT34</accession>
<keyword id="KW-0963">Cytoplasm</keyword>
<keyword id="KW-0251">Elongation factor</keyword>
<keyword id="KW-0648">Protein biosynthesis</keyword>
<keyword id="KW-1185">Reference proteome</keyword>
<dbReference type="EMBL" id="BA000035">
    <property type="protein sequence ID" value="BAC18547.1"/>
    <property type="status" value="ALT_INIT"/>
    <property type="molecule type" value="Genomic_DNA"/>
</dbReference>
<dbReference type="RefSeq" id="WP_011075583.1">
    <property type="nucleotide sequence ID" value="NC_004369.1"/>
</dbReference>
<dbReference type="SMR" id="Q8FT34"/>
<dbReference type="STRING" id="196164.gene:10742158"/>
<dbReference type="KEGG" id="cef:CE1737"/>
<dbReference type="eggNOG" id="COG0231">
    <property type="taxonomic scope" value="Bacteria"/>
</dbReference>
<dbReference type="HOGENOM" id="CLU_074944_0_1_11"/>
<dbReference type="OrthoDB" id="9801844at2"/>
<dbReference type="UniPathway" id="UPA00345"/>
<dbReference type="Proteomes" id="UP000001409">
    <property type="component" value="Chromosome"/>
</dbReference>
<dbReference type="GO" id="GO:0005737">
    <property type="term" value="C:cytoplasm"/>
    <property type="evidence" value="ECO:0007669"/>
    <property type="project" value="UniProtKB-SubCell"/>
</dbReference>
<dbReference type="GO" id="GO:0003746">
    <property type="term" value="F:translation elongation factor activity"/>
    <property type="evidence" value="ECO:0007669"/>
    <property type="project" value="UniProtKB-UniRule"/>
</dbReference>
<dbReference type="GO" id="GO:0043043">
    <property type="term" value="P:peptide biosynthetic process"/>
    <property type="evidence" value="ECO:0007669"/>
    <property type="project" value="InterPro"/>
</dbReference>
<dbReference type="CDD" id="cd04470">
    <property type="entry name" value="S1_EF-P_repeat_1"/>
    <property type="match status" value="1"/>
</dbReference>
<dbReference type="CDD" id="cd05794">
    <property type="entry name" value="S1_EF-P_repeat_2"/>
    <property type="match status" value="1"/>
</dbReference>
<dbReference type="FunFam" id="2.30.30.30:FF:000003">
    <property type="entry name" value="Elongation factor P"/>
    <property type="match status" value="1"/>
</dbReference>
<dbReference type="FunFam" id="2.40.50.140:FF:000004">
    <property type="entry name" value="Elongation factor P"/>
    <property type="match status" value="1"/>
</dbReference>
<dbReference type="FunFam" id="2.40.50.140:FF:000009">
    <property type="entry name" value="Elongation factor P"/>
    <property type="match status" value="1"/>
</dbReference>
<dbReference type="Gene3D" id="2.30.30.30">
    <property type="match status" value="1"/>
</dbReference>
<dbReference type="Gene3D" id="2.40.50.140">
    <property type="entry name" value="Nucleic acid-binding proteins"/>
    <property type="match status" value="2"/>
</dbReference>
<dbReference type="HAMAP" id="MF_00141">
    <property type="entry name" value="EF_P"/>
    <property type="match status" value="1"/>
</dbReference>
<dbReference type="InterPro" id="IPR015365">
    <property type="entry name" value="Elong-fact-P_C"/>
</dbReference>
<dbReference type="InterPro" id="IPR012340">
    <property type="entry name" value="NA-bd_OB-fold"/>
</dbReference>
<dbReference type="InterPro" id="IPR014722">
    <property type="entry name" value="Rib_uL2_dom2"/>
</dbReference>
<dbReference type="InterPro" id="IPR020599">
    <property type="entry name" value="Transl_elong_fac_P/YeiP"/>
</dbReference>
<dbReference type="InterPro" id="IPR013185">
    <property type="entry name" value="Transl_elong_KOW-like"/>
</dbReference>
<dbReference type="InterPro" id="IPR001059">
    <property type="entry name" value="Transl_elong_P/YeiP_cen"/>
</dbReference>
<dbReference type="InterPro" id="IPR013852">
    <property type="entry name" value="Transl_elong_P/YeiP_CS"/>
</dbReference>
<dbReference type="InterPro" id="IPR011768">
    <property type="entry name" value="Transl_elongation_fac_P"/>
</dbReference>
<dbReference type="InterPro" id="IPR008991">
    <property type="entry name" value="Translation_prot_SH3-like_sf"/>
</dbReference>
<dbReference type="NCBIfam" id="TIGR00038">
    <property type="entry name" value="efp"/>
    <property type="match status" value="1"/>
</dbReference>
<dbReference type="NCBIfam" id="NF001810">
    <property type="entry name" value="PRK00529.1"/>
    <property type="match status" value="1"/>
</dbReference>
<dbReference type="PANTHER" id="PTHR30053">
    <property type="entry name" value="ELONGATION FACTOR P"/>
    <property type="match status" value="1"/>
</dbReference>
<dbReference type="PANTHER" id="PTHR30053:SF12">
    <property type="entry name" value="ELONGATION FACTOR P (EF-P) FAMILY PROTEIN"/>
    <property type="match status" value="1"/>
</dbReference>
<dbReference type="Pfam" id="PF01132">
    <property type="entry name" value="EFP"/>
    <property type="match status" value="1"/>
</dbReference>
<dbReference type="Pfam" id="PF08207">
    <property type="entry name" value="EFP_N"/>
    <property type="match status" value="1"/>
</dbReference>
<dbReference type="Pfam" id="PF09285">
    <property type="entry name" value="Elong-fact-P_C"/>
    <property type="match status" value="1"/>
</dbReference>
<dbReference type="PIRSF" id="PIRSF005901">
    <property type="entry name" value="EF-P"/>
    <property type="match status" value="1"/>
</dbReference>
<dbReference type="SMART" id="SM01185">
    <property type="entry name" value="EFP"/>
    <property type="match status" value="1"/>
</dbReference>
<dbReference type="SMART" id="SM00841">
    <property type="entry name" value="Elong-fact-P_C"/>
    <property type="match status" value="1"/>
</dbReference>
<dbReference type="SUPFAM" id="SSF50249">
    <property type="entry name" value="Nucleic acid-binding proteins"/>
    <property type="match status" value="2"/>
</dbReference>
<dbReference type="SUPFAM" id="SSF50104">
    <property type="entry name" value="Translation proteins SH3-like domain"/>
    <property type="match status" value="1"/>
</dbReference>
<dbReference type="PROSITE" id="PS01275">
    <property type="entry name" value="EFP"/>
    <property type="match status" value="1"/>
</dbReference>
<protein>
    <recommendedName>
        <fullName evidence="1">Elongation factor P</fullName>
        <shortName evidence="1">EF-P</shortName>
    </recommendedName>
</protein>
<reference key="1">
    <citation type="journal article" date="2003" name="Genome Res.">
        <title>Comparative complete genome sequence analysis of the amino acid replacements responsible for the thermostability of Corynebacterium efficiens.</title>
        <authorList>
            <person name="Nishio Y."/>
            <person name="Nakamura Y."/>
            <person name="Kawarabayasi Y."/>
            <person name="Usuda Y."/>
            <person name="Kimura E."/>
            <person name="Sugimoto S."/>
            <person name="Matsui K."/>
            <person name="Yamagishi A."/>
            <person name="Kikuchi H."/>
            <person name="Ikeo K."/>
            <person name="Gojobori T."/>
        </authorList>
    </citation>
    <scope>NUCLEOTIDE SEQUENCE [LARGE SCALE GENOMIC DNA]</scope>
    <source>
        <strain>DSM 44549 / YS-314 / AJ 12310 / JCM 11189 / NBRC 100395</strain>
    </source>
</reference>
<feature type="chain" id="PRO_0000094239" description="Elongation factor P">
    <location>
        <begin position="1"/>
        <end position="187"/>
    </location>
</feature>
<comment type="function">
    <text evidence="1">Involved in peptide bond synthesis. Stimulates efficient translation and peptide-bond synthesis on native or reconstituted 70S ribosomes in vitro. Probably functions indirectly by altering the affinity of the ribosome for aminoacyl-tRNA, thus increasing their reactivity as acceptors for peptidyl transferase.</text>
</comment>
<comment type="pathway">
    <text evidence="1">Protein biosynthesis; polypeptide chain elongation.</text>
</comment>
<comment type="subcellular location">
    <subcellularLocation>
        <location evidence="1">Cytoplasm</location>
    </subcellularLocation>
</comment>
<comment type="similarity">
    <text evidence="1">Belongs to the elongation factor P family.</text>
</comment>
<comment type="sequence caution" evidence="2">
    <conflict type="erroneous initiation">
        <sequence resource="EMBL-CDS" id="BAC18547"/>
    </conflict>
</comment>
<name>EFP_COREF</name>
<gene>
    <name evidence="1" type="primary">efp</name>
    <name type="ordered locus">CE1737</name>
</gene>
<proteinExistence type="inferred from homology"/>
<evidence type="ECO:0000255" key="1">
    <source>
        <dbReference type="HAMAP-Rule" id="MF_00141"/>
    </source>
</evidence>
<evidence type="ECO:0000305" key="2"/>